<accession>Q01217</accession>
<accession>D3DLX4</accession>
<keyword id="KW-0002">3D-structure</keyword>
<keyword id="KW-0028">Amino-acid biosynthesis</keyword>
<keyword id="KW-0055">Arginine biosynthesis</keyword>
<keyword id="KW-0067">ATP-binding</keyword>
<keyword id="KW-0418">Kinase</keyword>
<keyword id="KW-0496">Mitochondrion</keyword>
<keyword id="KW-0511">Multifunctional enzyme</keyword>
<keyword id="KW-0521">NADP</keyword>
<keyword id="KW-0547">Nucleotide-binding</keyword>
<keyword id="KW-0560">Oxidoreductase</keyword>
<keyword id="KW-0597">Phosphoprotein</keyword>
<keyword id="KW-1185">Reference proteome</keyword>
<keyword id="KW-0808">Transferase</keyword>
<keyword id="KW-0809">Transit peptide</keyword>
<gene>
    <name type="primary">ARG5,6</name>
    <name type="ordered locus">YER069W</name>
</gene>
<evidence type="ECO:0000255" key="1"/>
<evidence type="ECO:0000255" key="2">
    <source>
        <dbReference type="PROSITE-ProRule" id="PRU00532"/>
    </source>
</evidence>
<evidence type="ECO:0000255" key="3">
    <source>
        <dbReference type="PROSITE-ProRule" id="PRU10010"/>
    </source>
</evidence>
<evidence type="ECO:0000269" key="4">
    <source>
    </source>
</evidence>
<evidence type="ECO:0000269" key="5">
    <source>
    </source>
</evidence>
<evidence type="ECO:0000269" key="6">
    <source>
    </source>
</evidence>
<evidence type="ECO:0000305" key="7"/>
<evidence type="ECO:0000305" key="8">
    <source>
    </source>
</evidence>
<evidence type="ECO:0007744" key="9">
    <source>
    </source>
</evidence>
<evidence type="ECO:0007829" key="10">
    <source>
        <dbReference type="PDB" id="3ZZF"/>
    </source>
</evidence>
<evidence type="ECO:0007829" key="11">
    <source>
        <dbReference type="PDB" id="3ZZG"/>
    </source>
</evidence>
<evidence type="ECO:0007829" key="12">
    <source>
        <dbReference type="PDB" id="3ZZH"/>
    </source>
</evidence>
<evidence type="ECO:0007829" key="13">
    <source>
        <dbReference type="PDB" id="4AB7"/>
    </source>
</evidence>
<protein>
    <recommendedName>
        <fullName>Protein ARG5,6, mitochondrial</fullName>
    </recommendedName>
    <component>
        <recommendedName>
            <fullName>N-acetyl-gamma-glutamyl-phosphate reductase</fullName>
            <ecNumber evidence="6">1.2.1.38</ecNumber>
        </recommendedName>
        <alternativeName>
            <fullName>N-acetyl-glutamate semialdehyde dehydrogenase</fullName>
            <shortName>NAGSA dehydrogenase</shortName>
        </alternativeName>
    </component>
    <component>
        <recommendedName>
            <fullName>Acetylglutamate kinase</fullName>
            <ecNumber evidence="6">2.7.2.8</ecNumber>
        </recommendedName>
        <alternativeName>
            <fullName>N-acetyl-L-glutamate 5-phosphotransferase</fullName>
        </alternativeName>
        <alternativeName>
            <fullName>NAG kinase</fullName>
            <shortName>AGK</shortName>
        </alternativeName>
    </component>
</protein>
<feature type="transit peptide" description="Mitochondrion" evidence="1">
    <location>
        <begin position="1"/>
        <end position="65"/>
    </location>
</feature>
<feature type="chain" id="PRO_0000002073" description="Acetylglutamate kinase" evidence="1">
    <location>
        <begin position="66"/>
        <end position="532"/>
    </location>
</feature>
<feature type="chain" id="PRO_0000002074" description="N-acetyl-gamma-glutamyl-phosphate reductase" evidence="1">
    <location>
        <begin position="533"/>
        <end position="863"/>
    </location>
</feature>
<feature type="domain" description="N-acetyltransferase" evidence="2">
    <location>
        <begin position="353"/>
        <end position="505"/>
    </location>
</feature>
<feature type="active site" evidence="3">
    <location>
        <position position="675"/>
    </location>
</feature>
<feature type="modified residue" description="Phosphoserine" evidence="9">
    <location>
        <position position="359"/>
    </location>
</feature>
<feature type="helix" evidence="12">
    <location>
        <begin position="68"/>
        <end position="75"/>
    </location>
</feature>
<feature type="helix" evidence="12">
    <location>
        <begin position="81"/>
        <end position="92"/>
    </location>
</feature>
<feature type="strand" evidence="12">
    <location>
        <begin position="100"/>
        <end position="104"/>
    </location>
</feature>
<feature type="helix" evidence="12">
    <location>
        <begin position="106"/>
        <end position="111"/>
    </location>
</feature>
<feature type="helix" evidence="12">
    <location>
        <begin position="113"/>
        <end position="125"/>
    </location>
</feature>
<feature type="strand" evidence="12">
    <location>
        <begin position="130"/>
        <end position="134"/>
    </location>
</feature>
<feature type="helix" evidence="12">
    <location>
        <begin position="137"/>
        <end position="146"/>
    </location>
</feature>
<feature type="helix" evidence="12">
    <location>
        <begin position="162"/>
        <end position="185"/>
    </location>
</feature>
<feature type="strand" evidence="12">
    <location>
        <begin position="190"/>
        <end position="193"/>
    </location>
</feature>
<feature type="strand" evidence="12">
    <location>
        <begin position="195"/>
        <end position="203"/>
    </location>
</feature>
<feature type="helix" evidence="12">
    <location>
        <begin position="205"/>
        <end position="208"/>
    </location>
</feature>
<feature type="strand" evidence="12">
    <location>
        <begin position="209"/>
        <end position="217"/>
    </location>
</feature>
<feature type="helix" evidence="12">
    <location>
        <begin position="220"/>
        <end position="228"/>
    </location>
</feature>
<feature type="strand" evidence="12">
    <location>
        <begin position="231"/>
        <end position="234"/>
    </location>
</feature>
<feature type="strand" evidence="11">
    <location>
        <begin position="237"/>
        <end position="239"/>
    </location>
</feature>
<feature type="strand" evidence="12">
    <location>
        <begin position="244"/>
        <end position="247"/>
    </location>
</feature>
<feature type="helix" evidence="12">
    <location>
        <begin position="250"/>
        <end position="261"/>
    </location>
</feature>
<feature type="strand" evidence="12">
    <location>
        <begin position="264"/>
        <end position="269"/>
    </location>
</feature>
<feature type="strand" evidence="10">
    <location>
        <begin position="271"/>
        <end position="274"/>
    </location>
</feature>
<feature type="turn" evidence="12">
    <location>
        <begin position="278"/>
        <end position="281"/>
    </location>
</feature>
<feature type="strand" evidence="12">
    <location>
        <begin position="286"/>
        <end position="288"/>
    </location>
</feature>
<feature type="helix" evidence="12">
    <location>
        <begin position="289"/>
        <end position="297"/>
    </location>
</feature>
<feature type="strand" evidence="11">
    <location>
        <begin position="300"/>
        <end position="302"/>
    </location>
</feature>
<feature type="helix" evidence="12">
    <location>
        <begin position="304"/>
        <end position="319"/>
    </location>
</feature>
<feature type="strand" evidence="12">
    <location>
        <begin position="326"/>
        <end position="329"/>
    </location>
</feature>
<feature type="helix" evidence="12">
    <location>
        <begin position="331"/>
        <end position="333"/>
    </location>
</feature>
<feature type="helix" evidence="12">
    <location>
        <begin position="334"/>
        <end position="339"/>
    </location>
</feature>
<feature type="strand" evidence="13">
    <location>
        <begin position="340"/>
        <end position="342"/>
    </location>
</feature>
<feature type="strand" evidence="12">
    <location>
        <begin position="345"/>
        <end position="349"/>
    </location>
</feature>
<feature type="strand" evidence="13">
    <location>
        <begin position="355"/>
        <end position="359"/>
    </location>
</feature>
<feature type="helix" evidence="13">
    <location>
        <begin position="360"/>
        <end position="362"/>
    </location>
</feature>
<feature type="helix" evidence="13">
    <location>
        <begin position="366"/>
        <end position="373"/>
    </location>
</feature>
<feature type="turn" evidence="13">
    <location>
        <begin position="377"/>
        <end position="379"/>
    </location>
</feature>
<feature type="strand" evidence="13">
    <location>
        <begin position="380"/>
        <end position="384"/>
    </location>
</feature>
<feature type="helix" evidence="13">
    <location>
        <begin position="386"/>
        <end position="394"/>
    </location>
</feature>
<feature type="strand" evidence="13">
    <location>
        <begin position="398"/>
        <end position="402"/>
    </location>
</feature>
<feature type="strand" evidence="13">
    <location>
        <begin position="407"/>
        <end position="413"/>
    </location>
</feature>
<feature type="strand" evidence="13">
    <location>
        <begin position="415"/>
        <end position="418"/>
    </location>
</feature>
<feature type="strand" evidence="13">
    <location>
        <begin position="420"/>
        <end position="426"/>
    </location>
</feature>
<feature type="helix" evidence="13">
    <location>
        <begin position="428"/>
        <end position="432"/>
    </location>
</feature>
<feature type="helix" evidence="13">
    <location>
        <begin position="435"/>
        <end position="446"/>
    </location>
</feature>
<feature type="strand" evidence="13">
    <location>
        <begin position="448"/>
        <end position="455"/>
    </location>
</feature>
<feature type="helix" evidence="13">
    <location>
        <begin position="461"/>
        <end position="467"/>
    </location>
</feature>
<feature type="strand" evidence="13">
    <location>
        <begin position="469"/>
        <end position="474"/>
    </location>
</feature>
<feature type="strand" evidence="13">
    <location>
        <begin position="477"/>
        <end position="483"/>
    </location>
</feature>
<feature type="helix" evidence="13">
    <location>
        <begin position="487"/>
        <end position="499"/>
    </location>
</feature>
<name>ARG56_YEAST</name>
<proteinExistence type="evidence at protein level"/>
<dbReference type="EC" id="1.2.1.38" evidence="6"/>
<dbReference type="EC" id="2.7.2.8" evidence="6"/>
<dbReference type="EMBL" id="X57017">
    <property type="protein sequence ID" value="CAA40336.1"/>
    <property type="molecule type" value="Genomic_DNA"/>
</dbReference>
<dbReference type="EMBL" id="U18813">
    <property type="protein sequence ID" value="AAB64605.1"/>
    <property type="molecule type" value="Genomic_DNA"/>
</dbReference>
<dbReference type="EMBL" id="BK006939">
    <property type="protein sequence ID" value="DAA07728.1"/>
    <property type="molecule type" value="Genomic_DNA"/>
</dbReference>
<dbReference type="PIR" id="S16807">
    <property type="entry name" value="S16807"/>
</dbReference>
<dbReference type="PDB" id="3ZZF">
    <property type="method" value="X-ray"/>
    <property type="resolution" value="2.20 A"/>
    <property type="chains" value="A/B/C/D=58-356"/>
</dbReference>
<dbReference type="PDB" id="3ZZG">
    <property type="method" value="X-ray"/>
    <property type="resolution" value="2.95 A"/>
    <property type="chains" value="A/B/C/D=58-356"/>
</dbReference>
<dbReference type="PDB" id="3ZZH">
    <property type="method" value="X-ray"/>
    <property type="resolution" value="2.10 A"/>
    <property type="chains" value="A/B/C/D=58-356"/>
</dbReference>
<dbReference type="PDB" id="3ZZI">
    <property type="method" value="X-ray"/>
    <property type="resolution" value="3.80 A"/>
    <property type="chains" value="A/B/C/D/E/F/G/H=58-513"/>
</dbReference>
<dbReference type="PDB" id="4AB7">
    <property type="method" value="X-ray"/>
    <property type="resolution" value="3.25 A"/>
    <property type="chains" value="A/B/C/D/E/F/G/H=58-513"/>
</dbReference>
<dbReference type="PDBsum" id="3ZZF"/>
<dbReference type="PDBsum" id="3ZZG"/>
<dbReference type="PDBsum" id="3ZZH"/>
<dbReference type="PDBsum" id="3ZZI"/>
<dbReference type="PDBsum" id="4AB7"/>
<dbReference type="SMR" id="Q01217"/>
<dbReference type="BioGRID" id="36812">
    <property type="interactions" value="38"/>
</dbReference>
<dbReference type="ComplexPortal" id="CPX-1151">
    <property type="entry name" value="N-acetylglutamate synthase NAGS/NAGK complex"/>
</dbReference>
<dbReference type="DIP" id="DIP-5348N"/>
<dbReference type="FunCoup" id="Q01217">
    <property type="interactions" value="156"/>
</dbReference>
<dbReference type="IntAct" id="Q01217">
    <property type="interactions" value="4"/>
</dbReference>
<dbReference type="MINT" id="Q01217"/>
<dbReference type="STRING" id="4932.YER069W"/>
<dbReference type="MoonProt" id="Q01217"/>
<dbReference type="iPTMnet" id="Q01217"/>
<dbReference type="PaxDb" id="4932-YER069W"/>
<dbReference type="PeptideAtlas" id="Q01217"/>
<dbReference type="EnsemblFungi" id="YER069W_mRNA">
    <property type="protein sequence ID" value="YER069W"/>
    <property type="gene ID" value="YER069W"/>
</dbReference>
<dbReference type="KEGG" id="sce:YER069W"/>
<dbReference type="AGR" id="SGD:S000000871"/>
<dbReference type="SGD" id="S000000871">
    <property type="gene designation" value="ARG5,6"/>
</dbReference>
<dbReference type="VEuPathDB" id="FungiDB:YER069W"/>
<dbReference type="eggNOG" id="KOG2436">
    <property type="taxonomic scope" value="Eukaryota"/>
</dbReference>
<dbReference type="eggNOG" id="KOG4354">
    <property type="taxonomic scope" value="Eukaryota"/>
</dbReference>
<dbReference type="HOGENOM" id="CLU_006384_4_0_1"/>
<dbReference type="InParanoid" id="Q01217"/>
<dbReference type="OMA" id="IAFIPHV"/>
<dbReference type="OrthoDB" id="438291at2759"/>
<dbReference type="BioCyc" id="YEAST:YER069W-MONOMER"/>
<dbReference type="BRENDA" id="2.7.2.8">
    <property type="organism ID" value="984"/>
</dbReference>
<dbReference type="Reactome" id="R-SCE-70635">
    <property type="pathway name" value="Urea cycle"/>
</dbReference>
<dbReference type="UniPathway" id="UPA00068">
    <property type="reaction ID" value="UER00107"/>
</dbReference>
<dbReference type="UniPathway" id="UPA00068">
    <property type="reaction ID" value="UER00108"/>
</dbReference>
<dbReference type="BioGRID-ORCS" id="856800">
    <property type="hits" value="0 hits in 13 CRISPR screens"/>
</dbReference>
<dbReference type="EvolutionaryTrace" id="Q01217"/>
<dbReference type="PRO" id="PR:Q01217"/>
<dbReference type="Proteomes" id="UP000002311">
    <property type="component" value="Chromosome V"/>
</dbReference>
<dbReference type="RNAct" id="Q01217">
    <property type="molecule type" value="protein"/>
</dbReference>
<dbReference type="GO" id="GO:0005759">
    <property type="term" value="C:mitochondrial matrix"/>
    <property type="evidence" value="ECO:0000314"/>
    <property type="project" value="SGD"/>
</dbReference>
<dbReference type="GO" id="GO:0005739">
    <property type="term" value="C:mitochondrion"/>
    <property type="evidence" value="ECO:0007005"/>
    <property type="project" value="SGD"/>
</dbReference>
<dbReference type="GO" id="GO:0003991">
    <property type="term" value="F:acetylglutamate kinase activity"/>
    <property type="evidence" value="ECO:0000314"/>
    <property type="project" value="SGD"/>
</dbReference>
<dbReference type="GO" id="GO:0005524">
    <property type="term" value="F:ATP binding"/>
    <property type="evidence" value="ECO:0007669"/>
    <property type="project" value="UniProtKB-KW"/>
</dbReference>
<dbReference type="GO" id="GO:0003942">
    <property type="term" value="F:N-acetyl-gamma-glutamyl-phosphate reductase activity"/>
    <property type="evidence" value="ECO:0000314"/>
    <property type="project" value="SGD"/>
</dbReference>
<dbReference type="GO" id="GO:0051287">
    <property type="term" value="F:NAD binding"/>
    <property type="evidence" value="ECO:0007669"/>
    <property type="project" value="InterPro"/>
</dbReference>
<dbReference type="GO" id="GO:0070401">
    <property type="term" value="F:NADP+ binding"/>
    <property type="evidence" value="ECO:0007669"/>
    <property type="project" value="InterPro"/>
</dbReference>
<dbReference type="GO" id="GO:0006526">
    <property type="term" value="P:L-arginine biosynthetic process"/>
    <property type="evidence" value="ECO:0000318"/>
    <property type="project" value="GO_Central"/>
</dbReference>
<dbReference type="GO" id="GO:0006592">
    <property type="term" value="P:ornithine biosynthetic process"/>
    <property type="evidence" value="ECO:0000304"/>
    <property type="project" value="SGD"/>
</dbReference>
<dbReference type="GO" id="GO:0006355">
    <property type="term" value="P:regulation of DNA-templated transcription"/>
    <property type="evidence" value="ECO:0000315"/>
    <property type="project" value="SGD"/>
</dbReference>
<dbReference type="CDD" id="cd04252">
    <property type="entry name" value="AAK_NAGK-fArgBP"/>
    <property type="match status" value="1"/>
</dbReference>
<dbReference type="CDD" id="cd23936">
    <property type="entry name" value="AGPR_C_ARG5_6_like"/>
    <property type="match status" value="1"/>
</dbReference>
<dbReference type="CDD" id="cd24149">
    <property type="entry name" value="AGPR_N_ARG5_6_like"/>
    <property type="match status" value="1"/>
</dbReference>
<dbReference type="CDD" id="cd04263">
    <property type="entry name" value="DUF619-NAGK-FABP"/>
    <property type="match status" value="1"/>
</dbReference>
<dbReference type="FunFam" id="3.30.360.10:FF:000019">
    <property type="entry name" value="Bifunctional acetylglutamate kinase/N-acetyl-gamma-glutamyl-phosphate reductase"/>
    <property type="match status" value="1"/>
</dbReference>
<dbReference type="FunFam" id="3.40.630.30:FF:000029">
    <property type="entry name" value="Bifunctional acetylglutamate kinase/N-acetyl-gamma-glutamyl-phosphate reductase"/>
    <property type="match status" value="1"/>
</dbReference>
<dbReference type="FunFam" id="3.40.1160.10:FF:000011">
    <property type="entry name" value="N-acetyl-gamma-glutamyl-phosphate reductase, variant"/>
    <property type="match status" value="1"/>
</dbReference>
<dbReference type="Gene3D" id="3.40.630.30">
    <property type="match status" value="1"/>
</dbReference>
<dbReference type="Gene3D" id="3.40.1160.10">
    <property type="entry name" value="Acetylglutamate kinase-like"/>
    <property type="match status" value="1"/>
</dbReference>
<dbReference type="Gene3D" id="3.30.360.10">
    <property type="entry name" value="Dihydrodipicolinate Reductase, domain 2"/>
    <property type="match status" value="1"/>
</dbReference>
<dbReference type="Gene3D" id="3.40.50.720">
    <property type="entry name" value="NAD(P)-binding Rossmann-like Domain"/>
    <property type="match status" value="1"/>
</dbReference>
<dbReference type="HAMAP" id="MF_00150">
    <property type="entry name" value="ArgC_type1"/>
    <property type="match status" value="1"/>
</dbReference>
<dbReference type="InterPro" id="IPR036393">
    <property type="entry name" value="AceGlu_kinase-like_sf"/>
</dbReference>
<dbReference type="InterPro" id="IPR004662">
    <property type="entry name" value="AcgluKinase_fam"/>
</dbReference>
<dbReference type="InterPro" id="IPR023013">
    <property type="entry name" value="AGPR_AS"/>
</dbReference>
<dbReference type="InterPro" id="IPR000706">
    <property type="entry name" value="AGPR_type-1"/>
</dbReference>
<dbReference type="InterPro" id="IPR001048">
    <property type="entry name" value="Asp/Glu/Uridylate_kinase"/>
</dbReference>
<dbReference type="InterPro" id="IPR036291">
    <property type="entry name" value="NAD(P)-bd_dom_sf"/>
</dbReference>
<dbReference type="InterPro" id="IPR041734">
    <property type="entry name" value="NAGK-fArgBP"/>
</dbReference>
<dbReference type="InterPro" id="IPR011241">
    <property type="entry name" value="NAGK/NAGSA"/>
</dbReference>
<dbReference type="InterPro" id="IPR000534">
    <property type="entry name" value="Semialdehyde_DH_NAD-bd"/>
</dbReference>
<dbReference type="InterPro" id="IPR006855">
    <property type="entry name" value="Vertebrate-like_GNAT_dom"/>
</dbReference>
<dbReference type="NCBIfam" id="TIGR00761">
    <property type="entry name" value="argB"/>
    <property type="match status" value="1"/>
</dbReference>
<dbReference type="NCBIfam" id="TIGR01850">
    <property type="entry name" value="argC"/>
    <property type="match status" value="1"/>
</dbReference>
<dbReference type="PANTHER" id="PTHR23342">
    <property type="entry name" value="N-ACETYLGLUTAMATE SYNTHASE"/>
    <property type="match status" value="1"/>
</dbReference>
<dbReference type="PANTHER" id="PTHR23342:SF0">
    <property type="entry name" value="N-ACETYLGLUTAMATE SYNTHASE, MITOCHONDRIAL"/>
    <property type="match status" value="1"/>
</dbReference>
<dbReference type="Pfam" id="PF00696">
    <property type="entry name" value="AA_kinase"/>
    <property type="match status" value="1"/>
</dbReference>
<dbReference type="Pfam" id="PF04768">
    <property type="entry name" value="NAT"/>
    <property type="match status" value="1"/>
</dbReference>
<dbReference type="Pfam" id="PF01118">
    <property type="entry name" value="Semialdhyde_dh"/>
    <property type="match status" value="1"/>
</dbReference>
<dbReference type="Pfam" id="PF22698">
    <property type="entry name" value="Semialdhyde_dhC_1"/>
    <property type="match status" value="1"/>
</dbReference>
<dbReference type="PIRSF" id="PIRSF036440">
    <property type="entry name" value="ARG5-6"/>
    <property type="match status" value="1"/>
</dbReference>
<dbReference type="SMART" id="SM00859">
    <property type="entry name" value="Semialdhyde_dh"/>
    <property type="match status" value="1"/>
</dbReference>
<dbReference type="SUPFAM" id="SSF53633">
    <property type="entry name" value="Carbamate kinase-like"/>
    <property type="match status" value="1"/>
</dbReference>
<dbReference type="SUPFAM" id="SSF55347">
    <property type="entry name" value="Glyceraldehyde-3-phosphate dehydrogenase-like, C-terminal domain"/>
    <property type="match status" value="1"/>
</dbReference>
<dbReference type="SUPFAM" id="SSF51735">
    <property type="entry name" value="NAD(P)-binding Rossmann-fold domains"/>
    <property type="match status" value="1"/>
</dbReference>
<dbReference type="PROSITE" id="PS01224">
    <property type="entry name" value="ARGC"/>
    <property type="match status" value="1"/>
</dbReference>
<dbReference type="PROSITE" id="PS51731">
    <property type="entry name" value="GNAT_NAGS"/>
    <property type="match status" value="1"/>
</dbReference>
<organism>
    <name type="scientific">Saccharomyces cerevisiae (strain ATCC 204508 / S288c)</name>
    <name type="common">Baker's yeast</name>
    <dbReference type="NCBI Taxonomy" id="559292"/>
    <lineage>
        <taxon>Eukaryota</taxon>
        <taxon>Fungi</taxon>
        <taxon>Dikarya</taxon>
        <taxon>Ascomycota</taxon>
        <taxon>Saccharomycotina</taxon>
        <taxon>Saccharomycetes</taxon>
        <taxon>Saccharomycetales</taxon>
        <taxon>Saccharomycetaceae</taxon>
        <taxon>Saccharomyces</taxon>
    </lineage>
</organism>
<reference key="1">
    <citation type="journal article" date="1991" name="Mol. Gen. Genet.">
        <title>Characterization of the yeast ARG5,6 gene: determination of the nucleotide sequence, analysis of the control region and of ARG5,6 transcript.</title>
        <authorList>
            <person name="Boonchird C."/>
            <person name="Messenguy F."/>
            <person name="Dubois E."/>
        </authorList>
    </citation>
    <scope>NUCLEOTIDE SEQUENCE [GENOMIC DNA]</scope>
    <scope>CATALYTIC ACTIVITY</scope>
    <source>
        <strain>Sigma 1278B</strain>
    </source>
</reference>
<reference key="2">
    <citation type="journal article" date="1997" name="Nature">
        <title>The nucleotide sequence of Saccharomyces cerevisiae chromosome V.</title>
        <authorList>
            <person name="Dietrich F.S."/>
            <person name="Mulligan J.T."/>
            <person name="Hennessy K.M."/>
            <person name="Yelton M.A."/>
            <person name="Allen E."/>
            <person name="Araujo R."/>
            <person name="Aviles E."/>
            <person name="Berno A."/>
            <person name="Brennan T."/>
            <person name="Carpenter J."/>
            <person name="Chen E."/>
            <person name="Cherry J.M."/>
            <person name="Chung E."/>
            <person name="Duncan M."/>
            <person name="Guzman E."/>
            <person name="Hartzell G."/>
            <person name="Hunicke-Smith S."/>
            <person name="Hyman R.W."/>
            <person name="Kayser A."/>
            <person name="Komp C."/>
            <person name="Lashkari D."/>
            <person name="Lew H."/>
            <person name="Lin D."/>
            <person name="Mosedale D."/>
            <person name="Nakahara K."/>
            <person name="Namath A."/>
            <person name="Norgren R."/>
            <person name="Oefner P."/>
            <person name="Oh C."/>
            <person name="Petel F.X."/>
            <person name="Roberts D."/>
            <person name="Sehl P."/>
            <person name="Schramm S."/>
            <person name="Shogren T."/>
            <person name="Smith V."/>
            <person name="Taylor P."/>
            <person name="Wei Y."/>
            <person name="Botstein D."/>
            <person name="Davis R.W."/>
        </authorList>
    </citation>
    <scope>NUCLEOTIDE SEQUENCE [LARGE SCALE GENOMIC DNA]</scope>
    <source>
        <strain>ATCC 204508 / S288c</strain>
    </source>
</reference>
<reference key="3">
    <citation type="journal article" date="2014" name="G3 (Bethesda)">
        <title>The reference genome sequence of Saccharomyces cerevisiae: Then and now.</title>
        <authorList>
            <person name="Engel S.R."/>
            <person name="Dietrich F.S."/>
            <person name="Fisk D.G."/>
            <person name="Binkley G."/>
            <person name="Balakrishnan R."/>
            <person name="Costanzo M.C."/>
            <person name="Dwight S.S."/>
            <person name="Hitz B.C."/>
            <person name="Karra K."/>
            <person name="Nash R.S."/>
            <person name="Weng S."/>
            <person name="Wong E.D."/>
            <person name="Lloyd P."/>
            <person name="Skrzypek M.S."/>
            <person name="Miyasato S.R."/>
            <person name="Simison M."/>
            <person name="Cherry J.M."/>
        </authorList>
    </citation>
    <scope>GENOME REANNOTATION</scope>
    <source>
        <strain>ATCC 204508 / S288c</strain>
    </source>
</reference>
<reference key="4">
    <citation type="journal article" date="1991" name="Eur. J. Biochem.">
        <title>Determination of amino acid sequences involved in the processing of the ARG5/ARG6 precursor in Saccharomyces cerevisiae.</title>
        <authorList>
            <person name="Boonchird C."/>
            <person name="Messenguy F."/>
            <person name="Dubois E."/>
        </authorList>
    </citation>
    <scope>PROTEOLYTIC PROCESSING</scope>
</reference>
<reference key="5">
    <citation type="journal article" date="2003" name="Nature">
        <title>Global analysis of protein expression in yeast.</title>
        <authorList>
            <person name="Ghaemmaghami S."/>
            <person name="Huh W.-K."/>
            <person name="Bower K."/>
            <person name="Howson R.W."/>
            <person name="Belle A."/>
            <person name="Dephoure N."/>
            <person name="O'Shea E.K."/>
            <person name="Weissman J.S."/>
        </authorList>
    </citation>
    <scope>LEVEL OF PROTEIN EXPRESSION [LARGE SCALE ANALYSIS]</scope>
</reference>
<reference key="6">
    <citation type="journal article" date="2007" name="J. Proteome Res.">
        <title>Large-scale phosphorylation analysis of alpha-factor-arrested Saccharomyces cerevisiae.</title>
        <authorList>
            <person name="Li X."/>
            <person name="Gerber S.A."/>
            <person name="Rudner A.D."/>
            <person name="Beausoleil S.A."/>
            <person name="Haas W."/>
            <person name="Villen J."/>
            <person name="Elias J.E."/>
            <person name="Gygi S.P."/>
        </authorList>
    </citation>
    <scope>PHOSPHORYLATION [LARGE SCALE ANALYSIS] AT SER-359</scope>
    <scope>IDENTIFICATION BY MASS SPECTROMETRY [LARGE SCALE ANALYSIS]</scope>
    <source>
        <strain>ADR376</strain>
    </source>
</reference>
<reference key="7">
    <citation type="journal article" date="2008" name="Mol. Cell. Proteomics">
        <title>A multidimensional chromatography technology for in-depth phosphoproteome analysis.</title>
        <authorList>
            <person name="Albuquerque C.P."/>
            <person name="Smolka M.B."/>
            <person name="Payne S.H."/>
            <person name="Bafna V."/>
            <person name="Eng J."/>
            <person name="Zhou H."/>
        </authorList>
    </citation>
    <scope>IDENTIFICATION BY MASS SPECTROMETRY [LARGE SCALE ANALYSIS]</scope>
</reference>
<sequence>MPSASLLVSTKRLNASKFQKFVSSLNKSTIAGFASVPLRAPPSVAFTRKKVGYSKRYVSSTNGFSATRSTVIQLLNNISTKREVEQYLKYFTSVSQQQFAVIKVGGAIISDNLHELASCLAFLYHVGLYPIVLHGTGPQVNGRLEAQGIEPDYIDGIRITDEHTMAVVRKCFLEQNLKLVTALEQLGVRARPITSGVFTADYLDKDKYKLVGNIKSVTKEPIEASIKAGALPILTSLAETASGQMLNVNADVAAGELARVFEPLKIVYLNEKGGIINGSTGEKISMINLDEEYDDLMKQSWVKYGTKLKIREIKELLDYLPRSSSVAIINVQDLQKELFTDSGAGTMIRRGYKLVKRSSIGEFPSADALRKALQRDAGISSGKESVASYLRYLENSDFVSYADEPLEAVAIVKKDTNVPTLDKFVCSDAAWLNNVTDNVFNVLRRDFPALQWVVSENDANIAWHFDKSQGSYLKGGKVLFWYGIDDINTISELVENFVKSCDTASTLNSSASSGVFANKKSARSYSTRSTPRPEGVNTNPGRVALIGARGYTGKNLVSLINGHPYLEVAHVSSRELKGQKLQDYTKSEIIYESLQIQDIRKLEEQNAVDFWVMALPNKVCEPFVETIQSVHGKSKIIDLSADHRFVSESDWAYGLPELNDRAKIANAAKIANPGCYATGSQLTISPLTKYINGLPTVFGVSGYSGAGTKPSPKNDPKFLNNNLIPYALSDHIHEREISARIGHNVAFMPHVGQWFQGISLTVSIPIKKGSLSIDEIRKLYRNFYEDEKLVHVIDDIPLVKDIEGTHGVVIGGFKLNDAEDRVVVCATIDNLLKGAATQCLQNINLAMGYGEYAGIPENKIIGV</sequence>
<comment type="catalytic activity">
    <reaction evidence="6">
        <text>N-acetyl-L-glutamate 5-semialdehyde + phosphate + NADP(+) = N-acetyl-L-glutamyl 5-phosphate + NADPH + H(+)</text>
        <dbReference type="Rhea" id="RHEA:21588"/>
        <dbReference type="ChEBI" id="CHEBI:15378"/>
        <dbReference type="ChEBI" id="CHEBI:29123"/>
        <dbReference type="ChEBI" id="CHEBI:43474"/>
        <dbReference type="ChEBI" id="CHEBI:57783"/>
        <dbReference type="ChEBI" id="CHEBI:57936"/>
        <dbReference type="ChEBI" id="CHEBI:58349"/>
        <dbReference type="EC" id="1.2.1.38"/>
    </reaction>
    <physiologicalReaction direction="left-to-right" evidence="8">
        <dbReference type="Rhea" id="RHEA:21589"/>
    </physiologicalReaction>
</comment>
<comment type="catalytic activity">
    <reaction evidence="6">
        <text>N-acetyl-L-glutamate + ATP = N-acetyl-L-glutamyl 5-phosphate + ADP</text>
        <dbReference type="Rhea" id="RHEA:14629"/>
        <dbReference type="ChEBI" id="CHEBI:30616"/>
        <dbReference type="ChEBI" id="CHEBI:44337"/>
        <dbReference type="ChEBI" id="CHEBI:57936"/>
        <dbReference type="ChEBI" id="CHEBI:456216"/>
        <dbReference type="EC" id="2.7.2.8"/>
    </reaction>
    <physiologicalReaction direction="left-to-right" evidence="8">
        <dbReference type="Rhea" id="RHEA:14630"/>
    </physiologicalReaction>
</comment>
<comment type="activity regulation">
    <text>The kinase activity is inhibited by arginine.</text>
</comment>
<comment type="pathway">
    <text>Amino-acid biosynthesis; L-arginine biosynthesis; N(2)-acetyl-L-ornithine from L-glutamate: step 2/4.</text>
</comment>
<comment type="pathway">
    <text>Amino-acid biosynthesis; L-arginine biosynthesis; N(2)-acetyl-L-ornithine from L-glutamate: step 3/4.</text>
</comment>
<comment type="subcellular location">
    <subcellularLocation>
        <location>Mitochondrion</location>
    </subcellularLocation>
</comment>
<comment type="PTM">
    <text evidence="5">The protein precursor is cleaved into the two biologically active enzymes, the kinase and the reductase.</text>
</comment>
<comment type="miscellaneous">
    <text evidence="4">Present with 1180 molecules/cell in log phase SD medium.</text>
</comment>
<comment type="similarity">
    <text evidence="7">In the N-terminal section; belongs to the acetylglutamate kinase family.</text>
</comment>
<comment type="similarity">
    <text evidence="7">In the C-terminal section; belongs to the NAGSA dehydrogenase family.</text>
</comment>